<organism>
    <name type="scientific">Mus musculus</name>
    <name type="common">Mouse</name>
    <dbReference type="NCBI Taxonomy" id="10090"/>
    <lineage>
        <taxon>Eukaryota</taxon>
        <taxon>Metazoa</taxon>
        <taxon>Chordata</taxon>
        <taxon>Craniata</taxon>
        <taxon>Vertebrata</taxon>
        <taxon>Euteleostomi</taxon>
        <taxon>Mammalia</taxon>
        <taxon>Eutheria</taxon>
        <taxon>Euarchontoglires</taxon>
        <taxon>Glires</taxon>
        <taxon>Rodentia</taxon>
        <taxon>Myomorpha</taxon>
        <taxon>Muroidea</taxon>
        <taxon>Muridae</taxon>
        <taxon>Murinae</taxon>
        <taxon>Mus</taxon>
        <taxon>Mus</taxon>
    </lineage>
</organism>
<gene>
    <name evidence="5" type="primary">Iqank1</name>
</gene>
<feature type="chain" id="PRO_0000343882" description="IQ motif and ankyrin repeat domain-containing protein 1">
    <location>
        <begin position="1"/>
        <end position="540"/>
    </location>
</feature>
<feature type="domain" description="IQ" evidence="2">
    <location>
        <begin position="62"/>
        <end position="91"/>
    </location>
</feature>
<feature type="repeat" description="ANK 1" evidence="1">
    <location>
        <begin position="191"/>
        <end position="220"/>
    </location>
</feature>
<feature type="repeat" description="ANK 2" evidence="1">
    <location>
        <begin position="224"/>
        <end position="253"/>
    </location>
</feature>
<feature type="region of interest" description="Disordered" evidence="3">
    <location>
        <begin position="1"/>
        <end position="62"/>
    </location>
</feature>
<feature type="coiled-coil region" evidence="1">
    <location>
        <begin position="281"/>
        <end position="388"/>
    </location>
</feature>
<feature type="compositionally biased region" description="Low complexity" evidence="3">
    <location>
        <begin position="1"/>
        <end position="17"/>
    </location>
</feature>
<name>IQAK1_MOUSE</name>
<reference key="1">
    <citation type="journal article" date="2009" name="PLoS Biol.">
        <title>Lineage-specific biology revealed by a finished genome assembly of the mouse.</title>
        <authorList>
            <person name="Church D.M."/>
            <person name="Goodstadt L."/>
            <person name="Hillier L.W."/>
            <person name="Zody M.C."/>
            <person name="Goldstein S."/>
            <person name="She X."/>
            <person name="Bult C.J."/>
            <person name="Agarwala R."/>
            <person name="Cherry J.L."/>
            <person name="DiCuccio M."/>
            <person name="Hlavina W."/>
            <person name="Kapustin Y."/>
            <person name="Meric P."/>
            <person name="Maglott D."/>
            <person name="Birtle Z."/>
            <person name="Marques A.C."/>
            <person name="Graves T."/>
            <person name="Zhou S."/>
            <person name="Teague B."/>
            <person name="Potamousis K."/>
            <person name="Churas C."/>
            <person name="Place M."/>
            <person name="Herschleb J."/>
            <person name="Runnheim R."/>
            <person name="Forrest D."/>
            <person name="Amos-Landgraf J."/>
            <person name="Schwartz D.C."/>
            <person name="Cheng Z."/>
            <person name="Lindblad-Toh K."/>
            <person name="Eichler E.E."/>
            <person name="Ponting C.P."/>
        </authorList>
    </citation>
    <scope>NUCLEOTIDE SEQUENCE [LARGE SCALE GENOMIC DNA]</scope>
    <source>
        <strain>C57BL/6J</strain>
    </source>
</reference>
<reference key="2">
    <citation type="journal article" date="2005" name="Science">
        <title>The transcriptional landscape of the mammalian genome.</title>
        <authorList>
            <person name="Carninci P."/>
            <person name="Kasukawa T."/>
            <person name="Katayama S."/>
            <person name="Gough J."/>
            <person name="Frith M.C."/>
            <person name="Maeda N."/>
            <person name="Oyama R."/>
            <person name="Ravasi T."/>
            <person name="Lenhard B."/>
            <person name="Wells C."/>
            <person name="Kodzius R."/>
            <person name="Shimokawa K."/>
            <person name="Bajic V.B."/>
            <person name="Brenner S.E."/>
            <person name="Batalov S."/>
            <person name="Forrest A.R."/>
            <person name="Zavolan M."/>
            <person name="Davis M.J."/>
            <person name="Wilming L.G."/>
            <person name="Aidinis V."/>
            <person name="Allen J.E."/>
            <person name="Ambesi-Impiombato A."/>
            <person name="Apweiler R."/>
            <person name="Aturaliya R.N."/>
            <person name="Bailey T.L."/>
            <person name="Bansal M."/>
            <person name="Baxter L."/>
            <person name="Beisel K.W."/>
            <person name="Bersano T."/>
            <person name="Bono H."/>
            <person name="Chalk A.M."/>
            <person name="Chiu K.P."/>
            <person name="Choudhary V."/>
            <person name="Christoffels A."/>
            <person name="Clutterbuck D.R."/>
            <person name="Crowe M.L."/>
            <person name="Dalla E."/>
            <person name="Dalrymple B.P."/>
            <person name="de Bono B."/>
            <person name="Della Gatta G."/>
            <person name="di Bernardo D."/>
            <person name="Down T."/>
            <person name="Engstrom P."/>
            <person name="Fagiolini M."/>
            <person name="Faulkner G."/>
            <person name="Fletcher C.F."/>
            <person name="Fukushima T."/>
            <person name="Furuno M."/>
            <person name="Futaki S."/>
            <person name="Gariboldi M."/>
            <person name="Georgii-Hemming P."/>
            <person name="Gingeras T.R."/>
            <person name="Gojobori T."/>
            <person name="Green R.E."/>
            <person name="Gustincich S."/>
            <person name="Harbers M."/>
            <person name="Hayashi Y."/>
            <person name="Hensch T.K."/>
            <person name="Hirokawa N."/>
            <person name="Hill D."/>
            <person name="Huminiecki L."/>
            <person name="Iacono M."/>
            <person name="Ikeo K."/>
            <person name="Iwama A."/>
            <person name="Ishikawa T."/>
            <person name="Jakt M."/>
            <person name="Kanapin A."/>
            <person name="Katoh M."/>
            <person name="Kawasawa Y."/>
            <person name="Kelso J."/>
            <person name="Kitamura H."/>
            <person name="Kitano H."/>
            <person name="Kollias G."/>
            <person name="Krishnan S.P."/>
            <person name="Kruger A."/>
            <person name="Kummerfeld S.K."/>
            <person name="Kurochkin I.V."/>
            <person name="Lareau L.F."/>
            <person name="Lazarevic D."/>
            <person name="Lipovich L."/>
            <person name="Liu J."/>
            <person name="Liuni S."/>
            <person name="McWilliam S."/>
            <person name="Madan Babu M."/>
            <person name="Madera M."/>
            <person name="Marchionni L."/>
            <person name="Matsuda H."/>
            <person name="Matsuzawa S."/>
            <person name="Miki H."/>
            <person name="Mignone F."/>
            <person name="Miyake S."/>
            <person name="Morris K."/>
            <person name="Mottagui-Tabar S."/>
            <person name="Mulder N."/>
            <person name="Nakano N."/>
            <person name="Nakauchi H."/>
            <person name="Ng P."/>
            <person name="Nilsson R."/>
            <person name="Nishiguchi S."/>
            <person name="Nishikawa S."/>
            <person name="Nori F."/>
            <person name="Ohara O."/>
            <person name="Okazaki Y."/>
            <person name="Orlando V."/>
            <person name="Pang K.C."/>
            <person name="Pavan W.J."/>
            <person name="Pavesi G."/>
            <person name="Pesole G."/>
            <person name="Petrovsky N."/>
            <person name="Piazza S."/>
            <person name="Reed J."/>
            <person name="Reid J.F."/>
            <person name="Ring B.Z."/>
            <person name="Ringwald M."/>
            <person name="Rost B."/>
            <person name="Ruan Y."/>
            <person name="Salzberg S.L."/>
            <person name="Sandelin A."/>
            <person name="Schneider C."/>
            <person name="Schoenbach C."/>
            <person name="Sekiguchi K."/>
            <person name="Semple C.A."/>
            <person name="Seno S."/>
            <person name="Sessa L."/>
            <person name="Sheng Y."/>
            <person name="Shibata Y."/>
            <person name="Shimada H."/>
            <person name="Shimada K."/>
            <person name="Silva D."/>
            <person name="Sinclair B."/>
            <person name="Sperling S."/>
            <person name="Stupka E."/>
            <person name="Sugiura K."/>
            <person name="Sultana R."/>
            <person name="Takenaka Y."/>
            <person name="Taki K."/>
            <person name="Tammoja K."/>
            <person name="Tan S.L."/>
            <person name="Tang S."/>
            <person name="Taylor M.S."/>
            <person name="Tegner J."/>
            <person name="Teichmann S.A."/>
            <person name="Ueda H.R."/>
            <person name="van Nimwegen E."/>
            <person name="Verardo R."/>
            <person name="Wei C.L."/>
            <person name="Yagi K."/>
            <person name="Yamanishi H."/>
            <person name="Zabarovsky E."/>
            <person name="Zhu S."/>
            <person name="Zimmer A."/>
            <person name="Hide W."/>
            <person name="Bult C."/>
            <person name="Grimmond S.M."/>
            <person name="Teasdale R.D."/>
            <person name="Liu E.T."/>
            <person name="Brusic V."/>
            <person name="Quackenbush J."/>
            <person name="Wahlestedt C."/>
            <person name="Mattick J.S."/>
            <person name="Hume D.A."/>
            <person name="Kai C."/>
            <person name="Sasaki D."/>
            <person name="Tomaru Y."/>
            <person name="Fukuda S."/>
            <person name="Kanamori-Katayama M."/>
            <person name="Suzuki M."/>
            <person name="Aoki J."/>
            <person name="Arakawa T."/>
            <person name="Iida J."/>
            <person name="Imamura K."/>
            <person name="Itoh M."/>
            <person name="Kato T."/>
            <person name="Kawaji H."/>
            <person name="Kawagashira N."/>
            <person name="Kawashima T."/>
            <person name="Kojima M."/>
            <person name="Kondo S."/>
            <person name="Konno H."/>
            <person name="Nakano K."/>
            <person name="Ninomiya N."/>
            <person name="Nishio T."/>
            <person name="Okada M."/>
            <person name="Plessy C."/>
            <person name="Shibata K."/>
            <person name="Shiraki T."/>
            <person name="Suzuki S."/>
            <person name="Tagami M."/>
            <person name="Waki K."/>
            <person name="Watahiki A."/>
            <person name="Okamura-Oho Y."/>
            <person name="Suzuki H."/>
            <person name="Kawai J."/>
            <person name="Hayashizaki Y."/>
        </authorList>
    </citation>
    <scope>NUCLEOTIDE SEQUENCE [LARGE SCALE MRNA]</scope>
    <source>
        <strain>C57BL/6J</strain>
        <tissue>Visual cortex</tissue>
    </source>
</reference>
<reference key="3">
    <citation type="journal article" date="2010" name="Cell">
        <title>A tissue-specific atlas of mouse protein phosphorylation and expression.</title>
        <authorList>
            <person name="Huttlin E.L."/>
            <person name="Jedrychowski M.P."/>
            <person name="Elias J.E."/>
            <person name="Goswami T."/>
            <person name="Rad R."/>
            <person name="Beausoleil S.A."/>
            <person name="Villen J."/>
            <person name="Haas W."/>
            <person name="Sowa M.E."/>
            <person name="Gygi S.P."/>
        </authorList>
    </citation>
    <scope>IDENTIFICATION BY MASS SPECTROMETRY [LARGE SCALE ANALYSIS]</scope>
    <source>
        <tissue>Testis</tissue>
    </source>
</reference>
<keyword id="KW-0040">ANK repeat</keyword>
<keyword id="KW-0175">Coiled coil</keyword>
<keyword id="KW-1185">Reference proteome</keyword>
<keyword id="KW-0677">Repeat</keyword>
<sequence length="540" mass="60994">MSTKKGGPKAASGKGQALLPGSKLRATAGKPRESRQLQRKASHPSKGSFSENPQAPAAPTAEDKAAIVIQCAFRQYLARRELARRCQERQEYLDEMEKLQKEAYLALVRQEQEAARRQREKEEAEERARREELQRRRRLLEAAFEGDLGEIRQVLKEVEQLMTREGVGYDEDGKARRLQRRVATVECEDSHGNTPLSEAAAGGQTMAIQLLAELGANPNTKGAFGRTPLYRAAFGGHLEAVEELLKIGADPRMYADDGSTPEQVASLAAVASVLQSWDLSLTEAMLKNMEAEQQRRAQEAQKHKENEAKRINIKVQQLAKEQQKCQKELQQAYCELNRRIMEHDKCERKFMGNTELTLQAIKDAEAQVDRLQQEAQKAEETLAMARLELREQTPEDEDTEPGLKCRVTELHDVLMKDVGDRIRADGRWPLVIDPSGQAATFLRYQDTNYVDTLNPEHLRPERIRLALLGALRYGKPLVFDLRQVNLFPVVQQQLEVVQTGLAQALLNRGLLAKEGYLSLLRPTDGPEYDPSQFQEARLEN</sequence>
<comment type="sequence caution" evidence="4">
    <conflict type="miscellaneous discrepancy">
        <sequence resource="EMBL-CDS" id="BAE34553"/>
    </conflict>
    <text>Intron retention.</text>
</comment>
<accession>Q3TYL0</accession>
<accession>A0A140LHX0</accession>
<protein>
    <recommendedName>
        <fullName evidence="4">IQ motif and ankyrin repeat domain-containing protein 1</fullName>
    </recommendedName>
</protein>
<evidence type="ECO:0000255" key="1"/>
<evidence type="ECO:0000255" key="2">
    <source>
        <dbReference type="PROSITE-ProRule" id="PRU00116"/>
    </source>
</evidence>
<evidence type="ECO:0000256" key="3">
    <source>
        <dbReference type="SAM" id="MobiDB-lite"/>
    </source>
</evidence>
<evidence type="ECO:0000305" key="4"/>
<evidence type="ECO:0000312" key="5">
    <source>
        <dbReference type="MGI" id="MGI:3588184"/>
    </source>
</evidence>
<dbReference type="EMBL" id="AC116487">
    <property type="status" value="NOT_ANNOTATED_CDS"/>
    <property type="molecule type" value="Genomic_DNA"/>
</dbReference>
<dbReference type="EMBL" id="AK158547">
    <property type="protein sequence ID" value="BAE34553.1"/>
    <property type="status" value="ALT_SEQ"/>
    <property type="molecule type" value="mRNA"/>
</dbReference>
<dbReference type="SMR" id="Q3TYL0"/>
<dbReference type="FunCoup" id="Q3TYL0">
    <property type="interactions" value="13"/>
</dbReference>
<dbReference type="STRING" id="10090.ENSMUSP00000146582"/>
<dbReference type="iPTMnet" id="Q3TYL0"/>
<dbReference type="PhosphoSitePlus" id="Q3TYL0"/>
<dbReference type="SwissPalm" id="Q3TYL0"/>
<dbReference type="PaxDb" id="10090-ENSMUSP00000140297"/>
<dbReference type="ProteomicsDB" id="320202"/>
<dbReference type="UCSC" id="uc007wie.1">
    <property type="organism name" value="mouse"/>
</dbReference>
<dbReference type="AGR" id="MGI:3588184"/>
<dbReference type="MGI" id="MGI:3588184">
    <property type="gene designation" value="Iqank1"/>
</dbReference>
<dbReference type="VEuPathDB" id="HostDB:ENSMUSG00000102018"/>
<dbReference type="eggNOG" id="KOG4177">
    <property type="taxonomic scope" value="Eukaryota"/>
</dbReference>
<dbReference type="InParanoid" id="Q3TYL0"/>
<dbReference type="PhylomeDB" id="Q3TYL0"/>
<dbReference type="ChiTaRS" id="Iqank1">
    <property type="organism name" value="mouse"/>
</dbReference>
<dbReference type="PRO" id="PR:Q3TYL0"/>
<dbReference type="Proteomes" id="UP000000589">
    <property type="component" value="Chromosome 15"/>
</dbReference>
<dbReference type="RNAct" id="Q3TYL0">
    <property type="molecule type" value="protein"/>
</dbReference>
<dbReference type="Gene3D" id="1.25.40.20">
    <property type="entry name" value="Ankyrin repeat-containing domain"/>
    <property type="match status" value="1"/>
</dbReference>
<dbReference type="Gene3D" id="3.40.50.300">
    <property type="entry name" value="P-loop containing nucleotide triphosphate hydrolases"/>
    <property type="match status" value="1"/>
</dbReference>
<dbReference type="InterPro" id="IPR002110">
    <property type="entry name" value="Ankyrin_rpt"/>
</dbReference>
<dbReference type="InterPro" id="IPR036770">
    <property type="entry name" value="Ankyrin_rpt-contain_sf"/>
</dbReference>
<dbReference type="InterPro" id="IPR000048">
    <property type="entry name" value="IQ_motif_EF-hand-BS"/>
</dbReference>
<dbReference type="InterPro" id="IPR027417">
    <property type="entry name" value="P-loop_NTPase"/>
</dbReference>
<dbReference type="PANTHER" id="PTHR24171:SF9">
    <property type="entry name" value="ANKYRIN REPEAT DOMAIN-CONTAINING PROTEIN 39"/>
    <property type="match status" value="1"/>
</dbReference>
<dbReference type="PANTHER" id="PTHR24171">
    <property type="entry name" value="ANKYRIN REPEAT DOMAIN-CONTAINING PROTEIN 39-RELATED"/>
    <property type="match status" value="1"/>
</dbReference>
<dbReference type="Pfam" id="PF12796">
    <property type="entry name" value="Ank_2"/>
    <property type="match status" value="1"/>
</dbReference>
<dbReference type="Pfam" id="PF00612">
    <property type="entry name" value="IQ"/>
    <property type="match status" value="1"/>
</dbReference>
<dbReference type="SMART" id="SM00248">
    <property type="entry name" value="ANK"/>
    <property type="match status" value="2"/>
</dbReference>
<dbReference type="SUPFAM" id="SSF48403">
    <property type="entry name" value="Ankyrin repeat"/>
    <property type="match status" value="1"/>
</dbReference>
<dbReference type="PROSITE" id="PS50297">
    <property type="entry name" value="ANK_REP_REGION"/>
    <property type="match status" value="1"/>
</dbReference>
<dbReference type="PROSITE" id="PS50088">
    <property type="entry name" value="ANK_REPEAT"/>
    <property type="match status" value="2"/>
</dbReference>
<dbReference type="PROSITE" id="PS50096">
    <property type="entry name" value="IQ"/>
    <property type="match status" value="1"/>
</dbReference>
<proteinExistence type="evidence at protein level"/>